<keyword id="KW-0496">Mitochondrion</keyword>
<keyword id="KW-1185">Reference proteome</keyword>
<keyword id="KW-0687">Ribonucleoprotein</keyword>
<keyword id="KW-0689">Ribosomal protein</keyword>
<keyword id="KW-0809">Transit peptide</keyword>
<accession>Q688C0</accession>
<feature type="transit peptide" description="Mitochondrion" evidence="2">
    <location>
        <begin position="1"/>
        <end position="23"/>
    </location>
</feature>
<feature type="chain" id="PRO_0000273072" description="Small ribosomal subunit protein uS3m">
    <location>
        <begin position="24"/>
        <end position="164"/>
    </location>
</feature>
<name>RT24_CAEEL</name>
<evidence type="ECO:0000250" key="1">
    <source>
        <dbReference type="UniProtKB" id="Q2M2T7"/>
    </source>
</evidence>
<evidence type="ECO:0000255" key="2"/>
<evidence type="ECO:0000305" key="3"/>
<proteinExistence type="inferred from homology"/>
<comment type="subunit">
    <text evidence="1">Component of the mitochondrial ribosome small subunit (28S) which comprises a 12S rRNA and about 30 distinct proteins.</text>
</comment>
<comment type="subcellular location">
    <subcellularLocation>
        <location evidence="1">Mitochondrion</location>
    </subcellularLocation>
</comment>
<comment type="similarity">
    <text evidence="3">Belongs to the universal ribosomal protein uS3 family.</text>
</comment>
<organism>
    <name type="scientific">Caenorhabditis elegans</name>
    <dbReference type="NCBI Taxonomy" id="6239"/>
    <lineage>
        <taxon>Eukaryota</taxon>
        <taxon>Metazoa</taxon>
        <taxon>Ecdysozoa</taxon>
        <taxon>Nematoda</taxon>
        <taxon>Chromadorea</taxon>
        <taxon>Rhabditida</taxon>
        <taxon>Rhabditina</taxon>
        <taxon>Rhabditomorpha</taxon>
        <taxon>Rhabditoidea</taxon>
        <taxon>Rhabditidae</taxon>
        <taxon>Peloderinae</taxon>
        <taxon>Caenorhabditis</taxon>
    </lineage>
</organism>
<dbReference type="EMBL" id="FO080445">
    <property type="protein sequence ID" value="CCD63774.1"/>
    <property type="molecule type" value="Genomic_DNA"/>
</dbReference>
<dbReference type="RefSeq" id="NP_001023176.1">
    <property type="nucleotide sequence ID" value="NM_001028005.6"/>
</dbReference>
<dbReference type="SMR" id="Q688C0"/>
<dbReference type="FunCoup" id="Q688C0">
    <property type="interactions" value="908"/>
</dbReference>
<dbReference type="STRING" id="6239.F33D4.8.1"/>
<dbReference type="PaxDb" id="6239-F33D4.8"/>
<dbReference type="PeptideAtlas" id="Q688C0"/>
<dbReference type="EnsemblMetazoa" id="F33D4.8.1">
    <property type="protein sequence ID" value="F33D4.8.1"/>
    <property type="gene ID" value="WBGene00023487"/>
</dbReference>
<dbReference type="GeneID" id="259579"/>
<dbReference type="KEGG" id="cel:CELE_F33D4.8"/>
<dbReference type="UCSC" id="F33D4.8">
    <property type="organism name" value="c. elegans"/>
</dbReference>
<dbReference type="AGR" id="WB:WBGene00023487"/>
<dbReference type="CTD" id="259579"/>
<dbReference type="WormBase" id="F33D4.8">
    <property type="protein sequence ID" value="CE37229"/>
    <property type="gene ID" value="WBGene00023487"/>
    <property type="gene designation" value="mrps-24"/>
</dbReference>
<dbReference type="eggNOG" id="ENOG502RXU1">
    <property type="taxonomic scope" value="Eukaryota"/>
</dbReference>
<dbReference type="GeneTree" id="ENSGT00390000011179"/>
<dbReference type="HOGENOM" id="CLU_134150_1_0_1"/>
<dbReference type="InParanoid" id="Q688C0"/>
<dbReference type="OMA" id="FLQGYTE"/>
<dbReference type="OrthoDB" id="5950413at2759"/>
<dbReference type="PhylomeDB" id="Q688C0"/>
<dbReference type="Reactome" id="R-CEL-5389840">
    <property type="pathway name" value="Mitochondrial translation elongation"/>
</dbReference>
<dbReference type="Reactome" id="R-CEL-5419276">
    <property type="pathway name" value="Mitochondrial translation termination"/>
</dbReference>
<dbReference type="PRO" id="PR:Q688C0"/>
<dbReference type="Proteomes" id="UP000001940">
    <property type="component" value="Chromosome IV"/>
</dbReference>
<dbReference type="Bgee" id="WBGene00023487">
    <property type="expression patterns" value="Expressed in pharyngeal muscle cell (C elegans) and 3 other cell types or tissues"/>
</dbReference>
<dbReference type="GO" id="GO:0005763">
    <property type="term" value="C:mitochondrial small ribosomal subunit"/>
    <property type="evidence" value="ECO:0000250"/>
    <property type="project" value="UniProtKB"/>
</dbReference>
<dbReference type="GO" id="GO:0003735">
    <property type="term" value="F:structural constituent of ribosome"/>
    <property type="evidence" value="ECO:0000250"/>
    <property type="project" value="UniProtKB"/>
</dbReference>
<dbReference type="GO" id="GO:0032543">
    <property type="term" value="P:mitochondrial translation"/>
    <property type="evidence" value="ECO:0000250"/>
    <property type="project" value="UniProtKB"/>
</dbReference>
<dbReference type="InterPro" id="IPR026146">
    <property type="entry name" value="Ribosomal_uS3m"/>
</dbReference>
<dbReference type="PANTHER" id="PTHR21244">
    <property type="entry name" value="MITOCHONDRIAL 28S RIBOSOMAL PROTEIN S24"/>
    <property type="match status" value="1"/>
</dbReference>
<dbReference type="PANTHER" id="PTHR21244:SF1">
    <property type="entry name" value="SMALL RIBOSOMAL SUBUNIT PROTEIN US3M"/>
    <property type="match status" value="1"/>
</dbReference>
<dbReference type="Pfam" id="PF14955">
    <property type="entry name" value="MRP-S24"/>
    <property type="match status" value="1"/>
</dbReference>
<protein>
    <recommendedName>
        <fullName evidence="3">Small ribosomal subunit protein uS3m</fullName>
    </recommendedName>
    <alternativeName>
        <fullName>28S ribosomal protein S24, mitochondrial</fullName>
        <shortName>MRP-S24</shortName>
        <shortName>S24mt</shortName>
    </alternativeName>
</protein>
<gene>
    <name type="primary">mrps-24</name>
    <name type="ORF">F33D4.8</name>
</gene>
<reference key="1">
    <citation type="journal article" date="1998" name="Science">
        <title>Genome sequence of the nematode C. elegans: a platform for investigating biology.</title>
        <authorList>
            <consortium name="The C. elegans sequencing consortium"/>
        </authorList>
    </citation>
    <scope>NUCLEOTIDE SEQUENCE [LARGE SCALE GENOMIC DNA]</scope>
    <source>
        <strain>Bristol N2</strain>
    </source>
</reference>
<sequence length="164" mass="19232">MLRSIQHVEALSSRQISTTSMLLKNRAGKTKSTSNRTQLLTYEMAQKPHHIGVRKSWLTWHSQNLEEFRQSQPLVVAQDEVVRRFIRGFFPQNLVVSGNEIVIKRRGNVLIVAGFLQYSRRLDIRRIYWMFGFAEEFLSILLKQPVKLEMAFVESEEDVAYNYI</sequence>